<gene>
    <name type="primary">SEC23</name>
    <name type="ordered locus">YPR181C</name>
    <name type="ORF">P9705.14</name>
</gene>
<name>SEC23_YEAST</name>
<proteinExistence type="evidence at protein level"/>
<organism>
    <name type="scientific">Saccharomyces cerevisiae (strain ATCC 204508 / S288c)</name>
    <name type="common">Baker's yeast</name>
    <dbReference type="NCBI Taxonomy" id="559292"/>
    <lineage>
        <taxon>Eukaryota</taxon>
        <taxon>Fungi</taxon>
        <taxon>Dikarya</taxon>
        <taxon>Ascomycota</taxon>
        <taxon>Saccharomycotina</taxon>
        <taxon>Saccharomycetes</taxon>
        <taxon>Saccharomycetales</taxon>
        <taxon>Saccharomycetaceae</taxon>
        <taxon>Saccharomyces</taxon>
    </lineage>
</organism>
<keyword id="KW-0002">3D-structure</keyword>
<keyword id="KW-0007">Acetylation</keyword>
<keyword id="KW-0963">Cytoplasm</keyword>
<keyword id="KW-0968">Cytoplasmic vesicle</keyword>
<keyword id="KW-0256">Endoplasmic reticulum</keyword>
<keyword id="KW-0931">ER-Golgi transport</keyword>
<keyword id="KW-0333">Golgi apparatus</keyword>
<keyword id="KW-0472">Membrane</keyword>
<keyword id="KW-0479">Metal-binding</keyword>
<keyword id="KW-0653">Protein transport</keyword>
<keyword id="KW-1185">Reference proteome</keyword>
<keyword id="KW-0813">Transport</keyword>
<keyword id="KW-0832">Ubl conjugation</keyword>
<keyword id="KW-0862">Zinc</keyword>
<feature type="chain" id="PRO_0000205145" description="Protein transport protein SEC23">
    <location>
        <begin position="1"/>
        <end position="768"/>
    </location>
</feature>
<feature type="binding site" evidence="10">
    <location>
        <position position="56"/>
    </location>
    <ligand>
        <name>Zn(2+)</name>
        <dbReference type="ChEBI" id="CHEBI:29105"/>
    </ligand>
</feature>
<feature type="binding site" evidence="10">
    <location>
        <position position="61"/>
    </location>
    <ligand>
        <name>Zn(2+)</name>
        <dbReference type="ChEBI" id="CHEBI:29105"/>
    </ligand>
</feature>
<feature type="binding site" evidence="10">
    <location>
        <position position="80"/>
    </location>
    <ligand>
        <name>Zn(2+)</name>
        <dbReference type="ChEBI" id="CHEBI:29105"/>
    </ligand>
</feature>
<feature type="binding site" evidence="10">
    <location>
        <position position="83"/>
    </location>
    <ligand>
        <name>Zn(2+)</name>
        <dbReference type="ChEBI" id="CHEBI:29105"/>
    </ligand>
</feature>
<feature type="modified residue" description="N-acetylmethionine" evidence="38">
    <location>
        <position position="1"/>
    </location>
</feature>
<feature type="helix" evidence="39">
    <location>
        <begin position="3"/>
        <end position="10"/>
    </location>
</feature>
<feature type="strand" evidence="39">
    <location>
        <begin position="11"/>
        <end position="22"/>
    </location>
</feature>
<feature type="helix" evidence="39">
    <location>
        <begin position="23"/>
        <end position="28"/>
    </location>
</feature>
<feature type="strand" evidence="39">
    <location>
        <begin position="33"/>
        <end position="37"/>
    </location>
</feature>
<feature type="strand" evidence="41">
    <location>
        <begin position="48"/>
        <end position="51"/>
    </location>
</feature>
<feature type="turn" evidence="39">
    <location>
        <begin position="59"/>
        <end position="61"/>
    </location>
</feature>
<feature type="strand" evidence="40">
    <location>
        <begin position="69"/>
        <end position="72"/>
    </location>
</feature>
<feature type="turn" evidence="39">
    <location>
        <begin position="73"/>
        <end position="76"/>
    </location>
</feature>
<feature type="strand" evidence="41">
    <location>
        <begin position="77"/>
        <end position="79"/>
    </location>
</feature>
<feature type="turn" evidence="39">
    <location>
        <begin position="81"/>
        <end position="83"/>
    </location>
</feature>
<feature type="strand" evidence="41">
    <location>
        <begin position="86"/>
        <end position="88"/>
    </location>
</feature>
<feature type="helix" evidence="39">
    <location>
        <begin position="91"/>
        <end position="93"/>
    </location>
</feature>
<feature type="strand" evidence="40">
    <location>
        <begin position="98"/>
        <end position="100"/>
    </location>
</feature>
<feature type="helix" evidence="39">
    <location>
        <begin position="103"/>
        <end position="105"/>
    </location>
</feature>
<feature type="strand" evidence="39">
    <location>
        <begin position="108"/>
        <end position="113"/>
    </location>
</feature>
<feature type="strand" evidence="39">
    <location>
        <begin position="123"/>
        <end position="129"/>
    </location>
</feature>
<feature type="helix" evidence="39">
    <location>
        <begin position="134"/>
        <end position="149"/>
    </location>
</feature>
<feature type="strand" evidence="39">
    <location>
        <begin position="156"/>
        <end position="168"/>
    </location>
</feature>
<feature type="strand" evidence="39">
    <location>
        <begin position="172"/>
        <end position="183"/>
    </location>
</feature>
<feature type="helix" evidence="39">
    <location>
        <begin position="190"/>
        <end position="198"/>
    </location>
</feature>
<feature type="strand" evidence="39">
    <location>
        <begin position="221"/>
        <end position="223"/>
    </location>
</feature>
<feature type="helix" evidence="39">
    <location>
        <begin position="224"/>
        <end position="227"/>
    </location>
</feature>
<feature type="strand" evidence="39">
    <location>
        <begin position="228"/>
        <end position="230"/>
    </location>
</feature>
<feature type="helix" evidence="39">
    <location>
        <begin position="231"/>
        <end position="243"/>
    </location>
</feature>
<feature type="helix" evidence="39">
    <location>
        <begin position="262"/>
        <end position="276"/>
    </location>
</feature>
<feature type="strand" evidence="39">
    <location>
        <begin position="283"/>
        <end position="290"/>
    </location>
</feature>
<feature type="strand" evidence="39">
    <location>
        <begin position="294"/>
        <end position="297"/>
    </location>
</feature>
<feature type="helix" evidence="39">
    <location>
        <begin position="311"/>
        <end position="315"/>
    </location>
</feature>
<feature type="helix" evidence="39">
    <location>
        <begin position="322"/>
        <end position="339"/>
    </location>
</feature>
<feature type="strand" evidence="39">
    <location>
        <begin position="342"/>
        <end position="348"/>
    </location>
</feature>
<feature type="helix" evidence="39">
    <location>
        <begin position="355"/>
        <end position="365"/>
    </location>
</feature>
<feature type="strand" evidence="39">
    <location>
        <begin position="369"/>
        <end position="373"/>
    </location>
</feature>
<feature type="helix" evidence="39">
    <location>
        <begin position="378"/>
        <end position="386"/>
    </location>
</feature>
<feature type="strand" evidence="39">
    <location>
        <begin position="394"/>
        <end position="397"/>
    </location>
</feature>
<feature type="strand" evidence="39">
    <location>
        <begin position="399"/>
        <end position="408"/>
    </location>
</feature>
<feature type="strand" evidence="39">
    <location>
        <begin position="412"/>
        <end position="420"/>
    </location>
</feature>
<feature type="strand" evidence="39">
    <location>
        <begin position="437"/>
        <end position="439"/>
    </location>
</feature>
<feature type="strand" evidence="39">
    <location>
        <begin position="443"/>
        <end position="450"/>
    </location>
</feature>
<feature type="strand" evidence="39">
    <location>
        <begin position="456"/>
        <end position="462"/>
    </location>
</feature>
<feature type="strand" evidence="39">
    <location>
        <begin position="484"/>
        <end position="495"/>
    </location>
</feature>
<feature type="turn" evidence="39">
    <location>
        <begin position="496"/>
        <end position="498"/>
    </location>
</feature>
<feature type="strand" evidence="39">
    <location>
        <begin position="499"/>
        <end position="512"/>
    </location>
</feature>
<feature type="helix" evidence="39">
    <location>
        <begin position="517"/>
        <end position="521"/>
    </location>
</feature>
<feature type="helix" evidence="39">
    <location>
        <begin position="525"/>
        <end position="539"/>
    </location>
</feature>
<feature type="helix" evidence="39">
    <location>
        <begin position="545"/>
        <end position="563"/>
    </location>
</feature>
<feature type="strand" evidence="41">
    <location>
        <begin position="564"/>
        <end position="567"/>
    </location>
</feature>
<feature type="helix" evidence="39">
    <location>
        <begin position="571"/>
        <end position="573"/>
    </location>
</feature>
<feature type="turn" evidence="39">
    <location>
        <begin position="578"/>
        <end position="581"/>
    </location>
</feature>
<feature type="helix" evidence="39">
    <location>
        <begin position="582"/>
        <end position="592"/>
    </location>
</feature>
<feature type="turn" evidence="39">
    <location>
        <begin position="594"/>
        <end position="596"/>
    </location>
</feature>
<feature type="helix" evidence="39">
    <location>
        <begin position="603"/>
        <end position="613"/>
    </location>
</feature>
<feature type="helix" evidence="39">
    <location>
        <begin position="618"/>
        <end position="625"/>
    </location>
</feature>
<feature type="strand" evidence="39">
    <location>
        <begin position="628"/>
        <end position="632"/>
    </location>
</feature>
<feature type="strand" evidence="39">
    <location>
        <begin position="634"/>
        <end position="636"/>
    </location>
</feature>
<feature type="helix" evidence="39">
    <location>
        <begin position="645"/>
        <end position="647"/>
    </location>
</feature>
<feature type="strand" evidence="39">
    <location>
        <begin position="653"/>
        <end position="657"/>
    </location>
</feature>
<feature type="strand" evidence="39">
    <location>
        <begin position="659"/>
        <end position="666"/>
    </location>
</feature>
<feature type="helix" evidence="39">
    <location>
        <begin position="668"/>
        <end position="676"/>
    </location>
</feature>
<feature type="helix" evidence="39">
    <location>
        <begin position="678"/>
        <end position="680"/>
    </location>
</feature>
<feature type="helix" evidence="40">
    <location>
        <begin position="682"/>
        <end position="684"/>
    </location>
</feature>
<feature type="helix" evidence="39">
    <location>
        <begin position="685"/>
        <end position="703"/>
    </location>
</feature>
<feature type="strand" evidence="39">
    <location>
        <begin position="710"/>
        <end position="715"/>
    </location>
</feature>
<feature type="helix" evidence="39">
    <location>
        <begin position="719"/>
        <end position="721"/>
    </location>
</feature>
<feature type="helix" evidence="39">
    <location>
        <begin position="722"/>
        <end position="725"/>
    </location>
</feature>
<feature type="strand" evidence="41">
    <location>
        <begin position="740"/>
        <end position="742"/>
    </location>
</feature>
<feature type="helix" evidence="39">
    <location>
        <begin position="752"/>
        <end position="763"/>
    </location>
</feature>
<sequence length="768" mass="85385">MDFETNEDINGVRFTWNVFPSTRSDANSNVVPVGCLYTPLKEYDELNVAPYNPVVCSGPHCKSILNPYCVIDPRNSSWSCPICNSRNHLPPQYTNLSQENMPLELQSTTIEYITNKPVTVPPIFFFVVDLTSETENLDSLKESIITSLSLLPPNALIGLITYGNVVQLHDLSSETIDRCNVFRGDREYQLEALTEMLTGQKPTGPGGAASHLPNAMNKVTPFSLNRFFLPLEQVEFKLNQLLENLSPDQWSVPAGHRPLRATGSALNIASLLLQGCYKNIPARIILFASGPGTVAPGLIVNSELKDPLRSHHDIDSDHAQHYKKACKFYNQIAQRVAANGHTVDIFAGCYDQIGMSEMKQLTDSTGGVLLLTDAFSTAIFKQSYLRLFAKDEEGYLKMAFNGNMAVKTSKDLKVQGLIGHASAVKKTDANNISESEIGIGATSTWKMASLSPYHSYAIFFEIANTAANSNPMMSAPGSADRPHLAYTQFITTYQHSSGTNRIRVTTVANQLLPFGTPAIAASFDQEAAAVLMARIAVHKAETDDGADVIRWLDRTLIKLCQKYADYNKDDPQSFRLAPNFSLYPQFTYYLRRSQFLSVFNNSPDETAFYRHIFTREDTTNSLIMIQPTLTSFSMEDDPQPVLLDSISVKPNTILLLDTFFFILIYHGEQIAQWRKAGYQDDPQYADFKALLEEPKLEAAELLVDRFPLPRFIDTEAGGSQARFLLSKLNPSDNYQDMARGGSTIVLTDDVSLQNFMTHLQQVAVSGQA</sequence>
<reference key="1">
    <citation type="journal article" date="1989" name="EMBO J.">
        <title>Yeast Sec23p acts in the cytoplasm to promote protein transport from the endoplasmic reticulum to the Golgi complex in vivo and in vitro.</title>
        <authorList>
            <person name="Hicke L."/>
            <person name="Schekman R.W."/>
        </authorList>
    </citation>
    <scope>NUCLEOTIDE SEQUENCE [GENOMIC DNA]</scope>
    <scope>FUNCTION</scope>
    <source>
        <strain>MBY8-20C</strain>
    </source>
</reference>
<reference key="2">
    <citation type="journal article" date="1997" name="Nature">
        <title>The nucleotide sequence of Saccharomyces cerevisiae chromosome XVI.</title>
        <authorList>
            <person name="Bussey H."/>
            <person name="Storms R.K."/>
            <person name="Ahmed A."/>
            <person name="Albermann K."/>
            <person name="Allen E."/>
            <person name="Ansorge W."/>
            <person name="Araujo R."/>
            <person name="Aparicio A."/>
            <person name="Barrell B.G."/>
            <person name="Badcock K."/>
            <person name="Benes V."/>
            <person name="Botstein D."/>
            <person name="Bowman S."/>
            <person name="Brueckner M."/>
            <person name="Carpenter J."/>
            <person name="Cherry J.M."/>
            <person name="Chung E."/>
            <person name="Churcher C.M."/>
            <person name="Coster F."/>
            <person name="Davis K."/>
            <person name="Davis R.W."/>
            <person name="Dietrich F.S."/>
            <person name="Delius H."/>
            <person name="DiPaolo T."/>
            <person name="Dubois E."/>
            <person name="Duesterhoeft A."/>
            <person name="Duncan M."/>
            <person name="Floeth M."/>
            <person name="Fortin N."/>
            <person name="Friesen J.D."/>
            <person name="Fritz C."/>
            <person name="Goffeau A."/>
            <person name="Hall J."/>
            <person name="Hebling U."/>
            <person name="Heumann K."/>
            <person name="Hilbert H."/>
            <person name="Hillier L.W."/>
            <person name="Hunicke-Smith S."/>
            <person name="Hyman R.W."/>
            <person name="Johnston M."/>
            <person name="Kalman S."/>
            <person name="Kleine K."/>
            <person name="Komp C."/>
            <person name="Kurdi O."/>
            <person name="Lashkari D."/>
            <person name="Lew H."/>
            <person name="Lin A."/>
            <person name="Lin D."/>
            <person name="Louis E.J."/>
            <person name="Marathe R."/>
            <person name="Messenguy F."/>
            <person name="Mewes H.-W."/>
            <person name="Mirtipati S."/>
            <person name="Moestl D."/>
            <person name="Mueller-Auer S."/>
            <person name="Namath A."/>
            <person name="Nentwich U."/>
            <person name="Oefner P."/>
            <person name="Pearson D."/>
            <person name="Petel F.X."/>
            <person name="Pohl T.M."/>
            <person name="Purnelle B."/>
            <person name="Rajandream M.A."/>
            <person name="Rechmann S."/>
            <person name="Rieger M."/>
            <person name="Riles L."/>
            <person name="Roberts D."/>
            <person name="Schaefer M."/>
            <person name="Scharfe M."/>
            <person name="Scherens B."/>
            <person name="Schramm S."/>
            <person name="Schroeder M."/>
            <person name="Sdicu A.-M."/>
            <person name="Tettelin H."/>
            <person name="Urrestarazu L.A."/>
            <person name="Ushinsky S."/>
            <person name="Vierendeels F."/>
            <person name="Vissers S."/>
            <person name="Voss H."/>
            <person name="Walsh S.V."/>
            <person name="Wambutt R."/>
            <person name="Wang Y."/>
            <person name="Wedler E."/>
            <person name="Wedler H."/>
            <person name="Winnett E."/>
            <person name="Zhong W.-W."/>
            <person name="Zollner A."/>
            <person name="Vo D.H."/>
            <person name="Hani J."/>
        </authorList>
    </citation>
    <scope>NUCLEOTIDE SEQUENCE [LARGE SCALE GENOMIC DNA]</scope>
    <source>
        <strain>ATCC 204508 / S288c</strain>
    </source>
</reference>
<reference key="3">
    <citation type="journal article" date="2014" name="G3 (Bethesda)">
        <title>The reference genome sequence of Saccharomyces cerevisiae: Then and now.</title>
        <authorList>
            <person name="Engel S.R."/>
            <person name="Dietrich F.S."/>
            <person name="Fisk D.G."/>
            <person name="Binkley G."/>
            <person name="Balakrishnan R."/>
            <person name="Costanzo M.C."/>
            <person name="Dwight S.S."/>
            <person name="Hitz B.C."/>
            <person name="Karra K."/>
            <person name="Nash R.S."/>
            <person name="Weng S."/>
            <person name="Wong E.D."/>
            <person name="Lloyd P."/>
            <person name="Skrzypek M.S."/>
            <person name="Miyasato S.R."/>
            <person name="Simison M."/>
            <person name="Cherry J.M."/>
        </authorList>
    </citation>
    <scope>GENOME REANNOTATION</scope>
    <source>
        <strain>ATCC 204508 / S288c</strain>
    </source>
</reference>
<reference key="4">
    <citation type="journal article" date="1980" name="Cell">
        <title>Identification of 23 complementation groups required for post-translational events in the yeast secretory pathway.</title>
        <authorList>
            <person name="Novick P."/>
            <person name="Field C."/>
            <person name="Schekman R.W."/>
        </authorList>
    </citation>
    <scope>FUNCTION</scope>
</reference>
<reference key="5">
    <citation type="journal article" date="1981" name="Cell">
        <title>Order of events in the yeast secretory pathway.</title>
        <authorList>
            <person name="Novick P."/>
            <person name="Ferro S."/>
            <person name="Schekman R.W."/>
        </authorList>
    </citation>
    <scope>FUNCTION</scope>
</reference>
<reference key="6">
    <citation type="journal article" date="1988" name="Cell">
        <title>Reconstitution of SEC gene product-dependent intercompartmental protein transport.</title>
        <authorList>
            <person name="Baker D."/>
            <person name="Hicke L."/>
            <person name="Rexach M.F."/>
            <person name="Schleyer M."/>
            <person name="Schekman R.W."/>
        </authorList>
    </citation>
    <scope>FUNCTION</scope>
</reference>
<reference key="7">
    <citation type="journal article" date="1988" name="J. Cell Biol.">
        <title>Reconstitution of protein transport from the endoplasmic reticulum to the Golgi complex in yeast: the acceptor Golgi compartment is defective in the sec23 mutant.</title>
        <authorList>
            <person name="Ruohola H."/>
            <person name="Kabcenell A.K."/>
            <person name="Ferro-Novick S."/>
        </authorList>
    </citation>
    <scope>FUNCTION</scope>
</reference>
<reference key="8">
    <citation type="journal article" date="1990" name="Cell">
        <title>Distinct sets of SEC genes govern transport vesicle formation and fusion early in the secretory pathway.</title>
        <authorList>
            <person name="Kaiser C.A."/>
            <person name="Schekman R.W."/>
        </authorList>
    </citation>
    <scope>FUNCTION</scope>
</reference>
<reference key="9">
    <citation type="journal article" date="1992" name="Mol. Biol. Cell">
        <title>Sec23p and a novel 105-kDa protein function as a multimeric complex to promote vesicle budding and protein transport from the endoplasmic reticulum.</title>
        <authorList>
            <person name="Hicke L."/>
            <person name="Yoshihisa T."/>
            <person name="Schekman R.W."/>
        </authorList>
    </citation>
    <scope>FUNCTION</scope>
    <scope>SUBUNIT</scope>
</reference>
<reference key="10">
    <citation type="journal article" date="1993" name="Eur. J. Cell Biol.">
        <title>Multicopy STS1 restores both protein transport and ribosomal RNA stability in a new yeast sec23 mutant allele.</title>
        <authorList>
            <person name="Liang S."/>
            <person name="Lacroute F."/>
            <person name="Kepes F."/>
        </authorList>
    </citation>
    <scope>FUNCTION</scope>
</reference>
<reference key="11">
    <citation type="journal article" date="1993" name="Science">
        <title>Requirement for a GTPase-activating protein in vesicle budding from the endoplasmic reticulum.</title>
        <authorList>
            <person name="Yoshihisa T."/>
            <person name="Barlowe C."/>
            <person name="Schekman R.W."/>
        </authorList>
    </citation>
    <scope>FUNCTION</scope>
</reference>
<reference key="12">
    <citation type="journal article" date="1995" name="Cell">
        <title>COPI- and COPII-coated vesicles bud directly from the endoplasmic reticulum in yeast.</title>
        <authorList>
            <person name="Bednarek S.Y."/>
            <person name="Ravazzola M."/>
            <person name="Hosobuchi M."/>
            <person name="Amherdt M."/>
            <person name="Perrelet A."/>
            <person name="Schekman R.W."/>
            <person name="Orci L."/>
        </authorList>
    </citation>
    <scope>FUNCTION</scope>
    <scope>SUBCELLULAR LOCATION</scope>
</reference>
<reference key="13">
    <citation type="journal article" date="1995" name="J. Cell Biol.">
        <title>Yeast SEC16 gene encodes a multidomain vesicle coat protein that interacts with Sec23p.</title>
        <authorList>
            <person name="Espenshade P.J."/>
            <person name="Gimeno R.E."/>
            <person name="Holzmacher E."/>
            <person name="Teung P."/>
            <person name="Kaiser C.A."/>
        </authorList>
    </citation>
    <scope>INTERACTION WITH SEC16</scope>
</reference>
<reference key="14">
    <citation type="journal article" date="1996" name="J. Cell Biol.">
        <title>Amino acid permeases require COPII components and the ER resident membrane protein Shr3p for packaging into transport vesicles in vitro.</title>
        <authorList>
            <person name="Kuehn M.J."/>
            <person name="Schekman R.W."/>
            <person name="Ljungdahl P.O."/>
        </authorList>
    </citation>
    <scope>FUNCTION</scope>
</reference>
<reference key="15">
    <citation type="journal article" date="1996" name="Mol. Biol. Cell">
        <title>COPII coat subunit interactions: Sec24p and Sec23p bind to adjacent regions of Sec16p.</title>
        <authorList>
            <person name="Gimeno R.E."/>
            <person name="Espenshade P.J."/>
            <person name="Kaiser C.A."/>
        </authorList>
    </citation>
    <scope>INTERACTION WITH SEC16</scope>
</reference>
<reference key="16">
    <citation type="journal article" date="1997" name="J. Biol. Chem.">
        <title>COPII subunit interactions in the assembly of the vesicle coat.</title>
        <authorList>
            <person name="Shaywitz D.A."/>
            <person name="Espenshade P.J."/>
            <person name="Gimeno R.E."/>
            <person name="Kaiser C.A."/>
        </authorList>
    </citation>
    <scope>IDENTIFICATION IN THE COPII COAT</scope>
    <scope>INTERACTION WITH SEC16</scope>
</reference>
<reference key="17">
    <citation type="journal article" date="1997" name="J. Cell Sci.">
        <title>Specific requirements for the ER to Golgi transport of GPI-anchored proteins in yeast.</title>
        <authorList>
            <person name="Suetterlin C."/>
            <person name="Doering T.L."/>
            <person name="Schimmoeller F."/>
            <person name="Schroeder S."/>
            <person name="Riezman H."/>
        </authorList>
    </citation>
    <scope>FUNCTION</scope>
</reference>
<reference key="18">
    <citation type="journal article" date="1997" name="Proc. Natl. Acad. Sci. U.S.A.">
        <title>Selective packaging of cargo molecules into endoplasmic reticulum-derived COPII vesicles.</title>
        <authorList>
            <person name="Campbell J.L."/>
            <person name="Schekman R.W."/>
        </authorList>
    </citation>
    <scope>FUNCTION</scope>
</reference>
<reference key="19">
    <citation type="journal article" date="1998" name="Anat. Rec.">
        <title>Role of endoplasmic reticulum-derived vesicles in the formation of Golgi elements in sec23 and sec18 Saccharomyces Cerevisiae mutants.</title>
        <authorList>
            <person name="Morin-Ganet M.N."/>
            <person name="Rambourg A."/>
            <person name="Clermont Y."/>
            <person name="Kepes F."/>
        </authorList>
    </citation>
    <scope>FUNCTION</scope>
</reference>
<reference key="20">
    <citation type="journal article" date="1998" name="Cell">
        <title>COPII-coated vesicle formation reconstituted with purified coat proteins and chemically defined liposomes.</title>
        <authorList>
            <person name="Matsuoka K."/>
            <person name="Orci L."/>
            <person name="Amherdt M."/>
            <person name="Bednarek S.Y."/>
            <person name="Hamamoto S."/>
            <person name="Schekman R.W."/>
            <person name="Yeung T."/>
        </authorList>
    </citation>
    <scope>SUBUNIT</scope>
    <scope>SUBCELLULAR LOCATION</scope>
</reference>
<reference key="21">
    <citation type="journal article" date="1998" name="Nature">
        <title>COPII-cargo interactions direct protein sorting into ER-derived transport vesicles.</title>
        <authorList>
            <person name="Kuehn M.J."/>
            <person name="Herrmann J.M."/>
            <person name="Schekman R.W."/>
        </authorList>
    </citation>
    <scope>FUNCTION OF THE SEC23/24 COMPLEX</scope>
</reference>
<reference key="22">
    <citation type="journal article" date="1998" name="Science">
        <title>Nucleation of COPII vesicular coat complex by endoplasmic reticulum to Golgi vesicle SNAREs.</title>
        <authorList>
            <person name="Springer S."/>
            <person name="Schekman R.W."/>
        </authorList>
    </citation>
    <scope>INTERACTION WITH BET1; BOS1; SAR1 AND SEC24</scope>
</reference>
<reference key="23">
    <citation type="journal article" date="1999" name="J. Bacteriol.">
        <title>Clathrin and two components of the COPII complex, Sec23p and Sec24p, could be involved in endocytosis of the Saccharomyces cerevisiae maltose transporter.</title>
        <authorList>
            <person name="Penalver E."/>
            <person name="Lucero P."/>
            <person name="Moreno E."/>
            <person name="Lagunas R."/>
        </authorList>
    </citation>
    <scope>FUNCTION OF THE SEC23/24 COMPLEX</scope>
</reference>
<reference key="24">
    <citation type="journal article" date="1999" name="Mol. Biol. Cell">
        <title>Shr3p mediates specific COPII coatomer-cargo interactions required for the packaging of amino acid permeases into ER-derived transport vesicles.</title>
        <authorList>
            <person name="Gilstring C.F."/>
            <person name="Melin-Larsson M."/>
            <person name="Ljungdahl P.O."/>
        </authorList>
    </citation>
    <scope>INTERACTION WITH SHR3</scope>
</reference>
<reference key="25">
    <citation type="journal article" date="2000" name="J. Cell Biol.">
        <title>Lst1p and Sec24p cooperate in sorting of the plasma membrane ATPase into COPII vesicles in Saccharomyces cerevisiae.</title>
        <authorList>
            <person name="Shimoni Y."/>
            <person name="Kurihara T."/>
            <person name="Ravazzola M."/>
            <person name="Amherdt M."/>
            <person name="Orci L."/>
            <person name="Schekman R.W."/>
        </authorList>
    </citation>
    <scope>FUNCTION</scope>
    <scope>SUBCELLULAR LOCATION</scope>
    <scope>INTERACTION WITH SFB3</scope>
</reference>
<reference key="26">
    <citation type="journal article" date="2000" name="Methods">
        <title>The use of liposomes to study COPII- and COPI-coated vesicle formation and membrane protein sorting.</title>
        <authorList>
            <person name="Matsuoka K."/>
            <person name="Schekman R.W."/>
        </authorList>
    </citation>
    <scope>FUNCTION</scope>
    <scope>SUBCELLULAR LOCATION</scope>
</reference>
<reference key="27">
    <citation type="journal article" date="2000" name="Mol. Biol. Cell">
        <title>Sec24p and Iss1p function interchangeably in transport vesicle formation from the endoplasmic reticulum in Saccharomyces cerevisiae.</title>
        <authorList>
            <person name="Kurihara T."/>
            <person name="Hamamoto S."/>
            <person name="Gimeno R.E."/>
            <person name="Kaiser C.A."/>
            <person name="Schekman R.W."/>
            <person name="Yoshihisa T."/>
        </authorList>
    </citation>
    <scope>INTERACTION WITH PDR17</scope>
</reference>
<reference key="28">
    <citation type="journal article" date="2001" name="EMBO J.">
        <title>An acidic sequence of a putative yeast Golgi membrane protein binds COPII and facilitates ER export.</title>
        <authorList>
            <person name="Votsmeier C."/>
            <person name="Gallwitz D."/>
        </authorList>
    </citation>
    <scope>INTERACTION WITH SYS1</scope>
</reference>
<reference key="29">
    <citation type="journal article" date="2001" name="J. Biol. Chem.">
        <title>Distinct roles for the cytoplasmic tail sequences of Emp24p and Erv25p in transport between the endoplasmic reticulum and Golgi complex.</title>
        <authorList>
            <person name="Belden W.J."/>
            <person name="Barlowe C."/>
        </authorList>
    </citation>
    <scope>INTERACTION WITH EMP24 AND ERV25</scope>
</reference>
<reference key="30">
    <citation type="journal article" date="2001" name="Nat. Cell Biol.">
        <title>Dynamics of the COPII coat with GTP and stable analogues.</title>
        <authorList>
            <person name="Antonny B."/>
            <person name="Madden D.T."/>
            <person name="Hamamoto S."/>
            <person name="Orci L."/>
            <person name="Schekman R.W."/>
        </authorList>
    </citation>
    <scope>IDENTIFICATION IN THE COPII COAT</scope>
</reference>
<reference key="31">
    <citation type="journal article" date="2009" name="Science">
        <title>Global analysis of Cdk1 substrate phosphorylation sites provides insights into evolution.</title>
        <authorList>
            <person name="Holt L.J."/>
            <person name="Tuch B.B."/>
            <person name="Villen J."/>
            <person name="Johnson A.D."/>
            <person name="Gygi S.P."/>
            <person name="Morgan D.O."/>
        </authorList>
    </citation>
    <scope>IDENTIFICATION BY MASS SPECTROMETRY [LARGE SCALE ANALYSIS]</scope>
</reference>
<reference key="32">
    <citation type="journal article" date="2012" name="Proc. Natl. Acad. Sci. U.S.A.">
        <title>N-terminal acetylome analyses and functional insights of the N-terminal acetyltransferase NatB.</title>
        <authorList>
            <person name="Van Damme P."/>
            <person name="Lasa M."/>
            <person name="Polevoda B."/>
            <person name="Gazquez C."/>
            <person name="Elosegui-Artola A."/>
            <person name="Kim D.S."/>
            <person name="De Juan-Pardo E."/>
            <person name="Demeyer K."/>
            <person name="Hole K."/>
            <person name="Larrea E."/>
            <person name="Timmerman E."/>
            <person name="Prieto J."/>
            <person name="Arnesen T."/>
            <person name="Sherman F."/>
            <person name="Gevaert K."/>
            <person name="Aldabe R."/>
        </authorList>
    </citation>
    <scope>ACETYLATION [LARGE SCALE ANALYSIS] AT MET-1</scope>
    <scope>IDENTIFICATION BY MASS SPECTROMETRY [LARGE SCALE ANALYSIS]</scope>
</reference>
<reference key="33">
    <citation type="journal article" date="2001" name="Proc. Natl. Acad. Sci. U.S.A.">
        <title>Structure of the Sec23p/24p and Sec13p/31p complexes of COPII.</title>
        <authorList>
            <person name="Lederkremer G.Z."/>
            <person name="Cheng Y."/>
            <person name="Petre B.M."/>
            <person name="Vogan E."/>
            <person name="Springer S."/>
            <person name="Schekman R.W."/>
            <person name="Walz T."/>
            <person name="Kirchhausen T."/>
        </authorList>
    </citation>
    <scope>ELECTRON MICROSCOPY OF THE SEC23/24 COMPLEX</scope>
</reference>
<reference key="34">
    <citation type="journal article" date="2001" name="Proc. Natl. Acad. Sci. U.S.A.">
        <title>Surface structure of the COPII-coated vesicle.</title>
        <authorList>
            <person name="Matsuoka K."/>
            <person name="Schekman R.W."/>
            <person name="Orci L."/>
            <person name="Heuser J.E."/>
        </authorList>
    </citation>
    <scope>ELECTRON MICROSCOPY OF THE SEC23/24 COMPLEX</scope>
</reference>
<reference key="35">
    <citation type="journal article" date="2002" name="J. Cell Biol.">
        <title>Sec16p potentiates the action of COPII proteins to bud transport vesicles.</title>
        <authorList>
            <person name="Supek F."/>
            <person name="Madden D.T."/>
            <person name="Hamamoto S."/>
            <person name="Orci L."/>
            <person name="Schekman R.W."/>
        </authorList>
    </citation>
    <scope>SUBCELLULAR LOCATION</scope>
</reference>
<reference key="36">
    <citation type="journal article" date="2003" name="Cell">
        <title>SNARE selectivity of the COPII coat.</title>
        <authorList>
            <person name="Mossessova E."/>
            <person name="Bickford L.C."/>
            <person name="Goldberg J."/>
        </authorList>
    </citation>
    <scope>FUNCTION OF THE SEC23/24 COMPLEX</scope>
    <scope>INTERACTION WITH BET1; SEC22 AND SED5</scope>
</reference>
<reference key="37">
    <citation type="journal article" date="2003" name="EMBO Rep.">
        <title>Self-assembly of minimal COPII cages.</title>
        <authorList>
            <person name="Antonny B."/>
            <person name="Gounon P."/>
            <person name="Schekman R.W."/>
            <person name="Orci L."/>
        </authorList>
    </citation>
    <scope>STRUCTURE OF THE COPII COMPLEX</scope>
</reference>
<reference key="38">
    <citation type="journal article" date="2003" name="Nat. Cell Biol.">
        <title>Ubp3 requires a cofactor, Bre5, to specifically de-ubiquitinate the COPII protein, Sec23.</title>
        <authorList>
            <person name="Cohen M."/>
            <person name="Stutz F."/>
            <person name="Belgareh N."/>
            <person name="Haguenauer-Tsapis R."/>
            <person name="Dargemont C."/>
        </authorList>
    </citation>
    <scope>UBIQUITINATION</scope>
    <scope>INTERACTION WITH SEC24</scope>
</reference>
<reference key="39">
    <citation type="journal article" date="2004" name="J. Biol. Chem.">
        <title>Reconstitution of coat protein complex II (COPII) vesicle formation from cargo-reconstituted proteoliposomes reveals the potential role of GTP hydrolysis by Sar1p in protein sorting.</title>
        <authorList>
            <person name="Sato K."/>
            <person name="Nakano A."/>
        </authorList>
    </citation>
    <scope>COPII COMPLEX ASSEMBLY</scope>
    <scope>FUNCTION OF THE COPII COMPLEX</scope>
</reference>
<reference key="40">
    <citation type="journal article" date="2005" name="Cell">
        <title>Exploration of the function and organization of the yeast early secretory pathway through an epistatic miniarray profile.</title>
        <authorList>
            <person name="Schuldiner M."/>
            <person name="Collins S.R."/>
            <person name="Thompson N.J."/>
            <person name="Denic V."/>
            <person name="Bhamidipati A."/>
            <person name="Punna T."/>
            <person name="Ihmels J."/>
            <person name="Andrews B."/>
            <person name="Boone C."/>
            <person name="Greenblatt J.F."/>
            <person name="Weissman J.S."/>
            <person name="Krogan N.J."/>
        </authorList>
    </citation>
    <scope>FUNCTION</scope>
    <scope>INTERACTION WITH GRH1</scope>
</reference>
<reference key="41">
    <citation type="journal article" date="2007" name="J. Cell Biol.">
        <title>The yeast orthologue of GRASP65 forms a complex with a coiled-coil protein that contributes to ER to Golgi traffic.</title>
        <authorList>
            <person name="Behnia R."/>
            <person name="Barr F.A."/>
            <person name="Flanagan J.J."/>
            <person name="Barlowe C."/>
            <person name="Munro S."/>
        </authorList>
    </citation>
    <scope>INTERACTION WITH GHR1</scope>
</reference>
<reference key="42">
    <citation type="journal article" date="2007" name="Nature">
        <title>TRAPPI tethers COPII vesicles by binding the coat subunit Sec23.</title>
        <authorList>
            <person name="Cai H."/>
            <person name="Yu S."/>
            <person name="Menon S."/>
            <person name="Cai Y."/>
            <person name="Lazarova D."/>
            <person name="Fu C."/>
            <person name="Reinisch K."/>
            <person name="Hay J.C."/>
            <person name="Ferro-Novick S."/>
        </authorList>
    </citation>
    <scope>FUNCTION</scope>
    <scope>INTERACTION WITH BET3</scope>
</reference>
<reference key="43">
    <citation type="journal article" date="2002" name="Nature">
        <title>Structure of the Sec23/24-Sar1 pre-budding complex of the COPII vesicle coat.</title>
        <authorList>
            <person name="Bi X."/>
            <person name="Corpina R.A."/>
            <person name="Goldberg J."/>
        </authorList>
    </citation>
    <scope>X-RAY CRYSTALLOGRAPHY (2.75 ANGSTROMS) IN COMPLEX WITH SAR1 AND ZINC</scope>
</reference>
<accession>P15303</accession>
<accession>D6W4I1</accession>
<evidence type="ECO:0000269" key="1">
    <source>
    </source>
</evidence>
<evidence type="ECO:0000269" key="2">
    <source>
    </source>
</evidence>
<evidence type="ECO:0000269" key="3">
    <source>
    </source>
</evidence>
<evidence type="ECO:0000269" key="4">
    <source>
    </source>
</evidence>
<evidence type="ECO:0000269" key="5">
    <source>
    </source>
</evidence>
<evidence type="ECO:0000269" key="6">
    <source>
    </source>
</evidence>
<evidence type="ECO:0000269" key="7">
    <source>
    </source>
</evidence>
<evidence type="ECO:0000269" key="8">
    <source>
    </source>
</evidence>
<evidence type="ECO:0000269" key="9">
    <source>
    </source>
</evidence>
<evidence type="ECO:0000269" key="10">
    <source>
    </source>
</evidence>
<evidence type="ECO:0000269" key="11">
    <source>
    </source>
</evidence>
<evidence type="ECO:0000269" key="12">
    <source>
    </source>
</evidence>
<evidence type="ECO:0000269" key="13">
    <source>
    </source>
</evidence>
<evidence type="ECO:0000269" key="14">
    <source>
    </source>
</evidence>
<evidence type="ECO:0000269" key="15">
    <source>
    </source>
</evidence>
<evidence type="ECO:0000269" key="16">
    <source>
    </source>
</evidence>
<evidence type="ECO:0000269" key="17">
    <source>
    </source>
</evidence>
<evidence type="ECO:0000269" key="18">
    <source>
    </source>
</evidence>
<evidence type="ECO:0000269" key="19">
    <source>
    </source>
</evidence>
<evidence type="ECO:0000269" key="20">
    <source>
    </source>
</evidence>
<evidence type="ECO:0000269" key="21">
    <source>
    </source>
</evidence>
<evidence type="ECO:0000269" key="22">
    <source>
    </source>
</evidence>
<evidence type="ECO:0000269" key="23">
    <source>
    </source>
</evidence>
<evidence type="ECO:0000269" key="24">
    <source>
    </source>
</evidence>
<evidence type="ECO:0000269" key="25">
    <source>
    </source>
</evidence>
<evidence type="ECO:0000269" key="26">
    <source>
    </source>
</evidence>
<evidence type="ECO:0000269" key="27">
    <source>
    </source>
</evidence>
<evidence type="ECO:0000269" key="28">
    <source>
    </source>
</evidence>
<evidence type="ECO:0000269" key="29">
    <source>
    </source>
</evidence>
<evidence type="ECO:0000269" key="30">
    <source>
    </source>
</evidence>
<evidence type="ECO:0000269" key="31">
    <source>
    </source>
</evidence>
<evidence type="ECO:0000269" key="32">
    <source>
    </source>
</evidence>
<evidence type="ECO:0000269" key="33">
    <source>
    </source>
</evidence>
<evidence type="ECO:0000269" key="34">
    <source>
    </source>
</evidence>
<evidence type="ECO:0000269" key="35">
    <source>
    </source>
</evidence>
<evidence type="ECO:0000269" key="36">
    <source>
    </source>
</evidence>
<evidence type="ECO:0000305" key="37"/>
<evidence type="ECO:0007744" key="38">
    <source>
    </source>
</evidence>
<evidence type="ECO:0007829" key="39">
    <source>
        <dbReference type="PDB" id="1M2O"/>
    </source>
</evidence>
<evidence type="ECO:0007829" key="40">
    <source>
        <dbReference type="PDB" id="1M2V"/>
    </source>
</evidence>
<evidence type="ECO:0007829" key="41">
    <source>
        <dbReference type="PDB" id="2QTV"/>
    </source>
</evidence>
<dbReference type="EMBL" id="X15474">
    <property type="protein sequence ID" value="CAA33501.1"/>
    <property type="molecule type" value="Genomic_DNA"/>
</dbReference>
<dbReference type="EMBL" id="U25842">
    <property type="protein sequence ID" value="AAB68114.1"/>
    <property type="molecule type" value="Genomic_DNA"/>
</dbReference>
<dbReference type="EMBL" id="BK006949">
    <property type="protein sequence ID" value="DAA11597.1"/>
    <property type="molecule type" value="Genomic_DNA"/>
</dbReference>
<dbReference type="PIR" id="S05742">
    <property type="entry name" value="BVBY23"/>
</dbReference>
<dbReference type="RefSeq" id="NP_015507.1">
    <property type="nucleotide sequence ID" value="NM_001184278.1"/>
</dbReference>
<dbReference type="PDB" id="1M2O">
    <property type="method" value="X-ray"/>
    <property type="resolution" value="2.50 A"/>
    <property type="chains" value="A/C=1-768"/>
</dbReference>
<dbReference type="PDB" id="1M2V">
    <property type="method" value="X-ray"/>
    <property type="resolution" value="2.75 A"/>
    <property type="chains" value="A=1-768"/>
</dbReference>
<dbReference type="PDB" id="2QTV">
    <property type="method" value="X-ray"/>
    <property type="resolution" value="2.50 A"/>
    <property type="chains" value="A=2-768"/>
</dbReference>
<dbReference type="PDB" id="4BZI">
    <property type="method" value="EM"/>
    <property type="resolution" value="23.00 A"/>
    <property type="chains" value="A/D/G=1-768"/>
</dbReference>
<dbReference type="PDB" id="6GNI">
    <property type="method" value="EM"/>
    <property type="resolution" value="4.90 A"/>
    <property type="chains" value="A=2-768"/>
</dbReference>
<dbReference type="PDB" id="6ZGA">
    <property type="method" value="EM"/>
    <property type="resolution" value="4.60 A"/>
    <property type="chains" value="A/E=2-768"/>
</dbReference>
<dbReference type="PDB" id="8BSH">
    <property type="method" value="EM"/>
    <property type="resolution" value="3.80 A"/>
    <property type="chains" value="A=1-768"/>
</dbReference>
<dbReference type="PDBsum" id="1M2O"/>
<dbReference type="PDBsum" id="1M2V"/>
<dbReference type="PDBsum" id="2QTV"/>
<dbReference type="PDBsum" id="4BZI"/>
<dbReference type="PDBsum" id="6GNI"/>
<dbReference type="PDBsum" id="6ZGA"/>
<dbReference type="PDBsum" id="8BSH"/>
<dbReference type="EMDB" id="EMD-0044"/>
<dbReference type="EMDB" id="EMD-11199"/>
<dbReference type="SMR" id="P15303"/>
<dbReference type="BioGRID" id="36353">
    <property type="interactions" value="526"/>
</dbReference>
<dbReference type="ComplexPortal" id="CPX-1341">
    <property type="entry name" value="SEC23-LST1 COPII cargo recruitment complex"/>
</dbReference>
<dbReference type="ComplexPortal" id="CPX-2523">
    <property type="entry name" value="COPII vesicle coat complex"/>
</dbReference>
<dbReference type="DIP" id="DIP-2232N"/>
<dbReference type="FunCoup" id="P15303">
    <property type="interactions" value="1247"/>
</dbReference>
<dbReference type="IntAct" id="P15303">
    <property type="interactions" value="43"/>
</dbReference>
<dbReference type="MINT" id="P15303"/>
<dbReference type="STRING" id="4932.YPR181C"/>
<dbReference type="MoonDB" id="P15303">
    <property type="type" value="Predicted"/>
</dbReference>
<dbReference type="iPTMnet" id="P15303"/>
<dbReference type="PaxDb" id="4932-YPR181C"/>
<dbReference type="PeptideAtlas" id="P15303"/>
<dbReference type="EnsemblFungi" id="YPR181C_mRNA">
    <property type="protein sequence ID" value="YPR181C"/>
    <property type="gene ID" value="YPR181C"/>
</dbReference>
<dbReference type="GeneID" id="856311"/>
<dbReference type="KEGG" id="sce:YPR181C"/>
<dbReference type="AGR" id="SGD:S000006385"/>
<dbReference type="SGD" id="S000006385">
    <property type="gene designation" value="SEC23"/>
</dbReference>
<dbReference type="VEuPathDB" id="FungiDB:YPR181C"/>
<dbReference type="eggNOG" id="KOG1986">
    <property type="taxonomic scope" value="Eukaryota"/>
</dbReference>
<dbReference type="GeneTree" id="ENSGT00390000006916"/>
<dbReference type="HOGENOM" id="CLU_008658_3_0_1"/>
<dbReference type="InParanoid" id="P15303"/>
<dbReference type="OMA" id="FPPHYAE"/>
<dbReference type="OrthoDB" id="10256289at2759"/>
<dbReference type="BioCyc" id="YEAST:G3O-34306-MONOMER"/>
<dbReference type="Reactome" id="R-SCE-204005">
    <property type="pathway name" value="COPII-mediated vesicle transport"/>
</dbReference>
<dbReference type="Reactome" id="R-SCE-5694530">
    <property type="pathway name" value="Cargo concentration in the ER"/>
</dbReference>
<dbReference type="Reactome" id="R-SCE-983170">
    <property type="pathway name" value="Antigen Presentation: Folding, assembly and peptide loading of class I MHC"/>
</dbReference>
<dbReference type="BioGRID-ORCS" id="856311">
    <property type="hits" value="9 hits in 10 CRISPR screens"/>
</dbReference>
<dbReference type="EvolutionaryTrace" id="P15303"/>
<dbReference type="PRO" id="PR:P15303"/>
<dbReference type="Proteomes" id="UP000002311">
    <property type="component" value="Chromosome XVI"/>
</dbReference>
<dbReference type="RNAct" id="P15303">
    <property type="molecule type" value="protein"/>
</dbReference>
<dbReference type="GO" id="GO:0030127">
    <property type="term" value="C:COPII vesicle coat"/>
    <property type="evidence" value="ECO:0000314"/>
    <property type="project" value="ComplexPortal"/>
</dbReference>
<dbReference type="GO" id="GO:0005783">
    <property type="term" value="C:endoplasmic reticulum"/>
    <property type="evidence" value="ECO:0000314"/>
    <property type="project" value="ComplexPortal"/>
</dbReference>
<dbReference type="GO" id="GO:0070971">
    <property type="term" value="C:endoplasmic reticulum exit site"/>
    <property type="evidence" value="ECO:0000318"/>
    <property type="project" value="GO_Central"/>
</dbReference>
<dbReference type="GO" id="GO:0005789">
    <property type="term" value="C:endoplasmic reticulum membrane"/>
    <property type="evidence" value="ECO:0007669"/>
    <property type="project" value="UniProtKB-SubCell"/>
</dbReference>
<dbReference type="GO" id="GO:0000139">
    <property type="term" value="C:Golgi membrane"/>
    <property type="evidence" value="ECO:0007669"/>
    <property type="project" value="UniProtKB-SubCell"/>
</dbReference>
<dbReference type="GO" id="GO:0005096">
    <property type="term" value="F:GTPase activator activity"/>
    <property type="evidence" value="ECO:0000314"/>
    <property type="project" value="FlyBase"/>
</dbReference>
<dbReference type="GO" id="GO:0008270">
    <property type="term" value="F:zinc ion binding"/>
    <property type="evidence" value="ECO:0007669"/>
    <property type="project" value="InterPro"/>
</dbReference>
<dbReference type="GO" id="GO:0090110">
    <property type="term" value="P:COPII-coated vesicle cargo loading"/>
    <property type="evidence" value="ECO:0000314"/>
    <property type="project" value="ComplexPortal"/>
</dbReference>
<dbReference type="GO" id="GO:0006886">
    <property type="term" value="P:intracellular protein transport"/>
    <property type="evidence" value="ECO:0000314"/>
    <property type="project" value="ComplexPortal"/>
</dbReference>
<dbReference type="GO" id="GO:0016236">
    <property type="term" value="P:macroautophagy"/>
    <property type="evidence" value="ECO:0000315"/>
    <property type="project" value="SGD"/>
</dbReference>
<dbReference type="GO" id="GO:1902953">
    <property type="term" value="P:positive regulation of ER to Golgi vesicle-mediated transport"/>
    <property type="evidence" value="ECO:0000314"/>
    <property type="project" value="ComplexPortal"/>
</dbReference>
<dbReference type="GO" id="GO:0070863">
    <property type="term" value="P:positive regulation of protein exit from endoplasmic reticulum"/>
    <property type="evidence" value="ECO:0000314"/>
    <property type="project" value="ComplexPortal"/>
</dbReference>
<dbReference type="GO" id="GO:0003400">
    <property type="term" value="P:regulation of COPII vesicle coating"/>
    <property type="evidence" value="ECO:0000314"/>
    <property type="project" value="SGD"/>
</dbReference>
<dbReference type="GO" id="GO:0061709">
    <property type="term" value="P:reticulophagy"/>
    <property type="evidence" value="ECO:0000315"/>
    <property type="project" value="SGD"/>
</dbReference>
<dbReference type="CDD" id="cd01478">
    <property type="entry name" value="Sec23-like"/>
    <property type="match status" value="1"/>
</dbReference>
<dbReference type="CDD" id="cd11287">
    <property type="entry name" value="Sec23_C"/>
    <property type="match status" value="1"/>
</dbReference>
<dbReference type="FunFam" id="1.20.120.730:FF:000001">
    <property type="entry name" value="Protein transport protein SEC23"/>
    <property type="match status" value="1"/>
</dbReference>
<dbReference type="FunFam" id="2.30.30.380:FF:000001">
    <property type="entry name" value="Protein transport protein SEC23"/>
    <property type="match status" value="1"/>
</dbReference>
<dbReference type="FunFam" id="3.40.20.10:FF:000006">
    <property type="entry name" value="Protein transport protein SEC23"/>
    <property type="match status" value="1"/>
</dbReference>
<dbReference type="FunFam" id="3.40.50.410:FF:000008">
    <property type="entry name" value="Protein transport protein SEC23"/>
    <property type="match status" value="1"/>
</dbReference>
<dbReference type="Gene3D" id="2.60.40.1670">
    <property type="entry name" value="beta-sandwich domain of Sec23/24"/>
    <property type="match status" value="1"/>
</dbReference>
<dbReference type="Gene3D" id="1.20.120.730">
    <property type="entry name" value="Sec23/Sec24 helical domain"/>
    <property type="match status" value="1"/>
</dbReference>
<dbReference type="Gene3D" id="3.40.20.10">
    <property type="entry name" value="Severin"/>
    <property type="match status" value="1"/>
</dbReference>
<dbReference type="Gene3D" id="3.40.50.410">
    <property type="entry name" value="von Willebrand factor, type A domain"/>
    <property type="match status" value="1"/>
</dbReference>
<dbReference type="Gene3D" id="2.30.30.380">
    <property type="entry name" value="Zn-finger domain of Sec23/24"/>
    <property type="match status" value="1"/>
</dbReference>
<dbReference type="InterPro" id="IPR029006">
    <property type="entry name" value="ADF-H/Gelsolin-like_dom_sf"/>
</dbReference>
<dbReference type="InterPro" id="IPR007123">
    <property type="entry name" value="Gelsolin-like_dom"/>
</dbReference>
<dbReference type="InterPro" id="IPR036180">
    <property type="entry name" value="Gelsolin-like_dom_sf"/>
</dbReference>
<dbReference type="InterPro" id="IPR037364">
    <property type="entry name" value="Sec23"/>
</dbReference>
<dbReference type="InterPro" id="IPR006900">
    <property type="entry name" value="Sec23/24_helical_dom"/>
</dbReference>
<dbReference type="InterPro" id="IPR036175">
    <property type="entry name" value="Sec23/24_helical_dom_sf"/>
</dbReference>
<dbReference type="InterPro" id="IPR006896">
    <property type="entry name" value="Sec23/24_trunk_dom"/>
</dbReference>
<dbReference type="InterPro" id="IPR012990">
    <property type="entry name" value="Sec23_24_beta_S"/>
</dbReference>
<dbReference type="InterPro" id="IPR037550">
    <property type="entry name" value="Sec23_C"/>
</dbReference>
<dbReference type="InterPro" id="IPR036465">
    <property type="entry name" value="vWFA_dom_sf"/>
</dbReference>
<dbReference type="InterPro" id="IPR006895">
    <property type="entry name" value="Znf_Sec23_Sec24"/>
</dbReference>
<dbReference type="InterPro" id="IPR036174">
    <property type="entry name" value="Znf_Sec23_Sec24_sf"/>
</dbReference>
<dbReference type="PANTHER" id="PTHR11141">
    <property type="entry name" value="PROTEIN TRANSPORT PROTEIN SEC23"/>
    <property type="match status" value="1"/>
</dbReference>
<dbReference type="PANTHER" id="PTHR11141:SF0">
    <property type="entry name" value="PROTEIN TRANSPORT PROTEIN SEC23"/>
    <property type="match status" value="1"/>
</dbReference>
<dbReference type="Pfam" id="PF00626">
    <property type="entry name" value="Gelsolin"/>
    <property type="match status" value="1"/>
</dbReference>
<dbReference type="Pfam" id="PF08033">
    <property type="entry name" value="Sec23_BS"/>
    <property type="match status" value="1"/>
</dbReference>
<dbReference type="Pfam" id="PF04815">
    <property type="entry name" value="Sec23_helical"/>
    <property type="match status" value="1"/>
</dbReference>
<dbReference type="Pfam" id="PF04811">
    <property type="entry name" value="Sec23_trunk"/>
    <property type="match status" value="1"/>
</dbReference>
<dbReference type="Pfam" id="PF04810">
    <property type="entry name" value="zf-Sec23_Sec24"/>
    <property type="match status" value="1"/>
</dbReference>
<dbReference type="SUPFAM" id="SSF81995">
    <property type="entry name" value="beta-sandwich domain of Sec23/24"/>
    <property type="match status" value="1"/>
</dbReference>
<dbReference type="SUPFAM" id="SSF82754">
    <property type="entry name" value="C-terminal, gelsolin-like domain of Sec23/24"/>
    <property type="match status" value="1"/>
</dbReference>
<dbReference type="SUPFAM" id="SSF81811">
    <property type="entry name" value="Helical domain of Sec23/24"/>
    <property type="match status" value="1"/>
</dbReference>
<dbReference type="SUPFAM" id="SSF53300">
    <property type="entry name" value="vWA-like"/>
    <property type="match status" value="1"/>
</dbReference>
<dbReference type="SUPFAM" id="SSF82919">
    <property type="entry name" value="Zn-finger domain of Sec23/24"/>
    <property type="match status" value="1"/>
</dbReference>
<comment type="function">
    <text evidence="1 4 5 12 13 14 15 17 18 19 20 21 22 23 25 26 27 28 30 32 33 35">Component of the coat protein complex II (COPII) which promotes the formation of transport vesicles from the endoplasmic reticulum (ER). The coat has two main functions, the physical deformation of the endoplasmic reticulum membrane into vesicles and the selection of cargo molecules. SEC23 interacts with BET3 in order to target TRAPPI complex to COPII involved in internalization of plasma membrane proteins like the maltose transporter.</text>
</comment>
<comment type="subunit">
    <text evidence="2 3 5 6 7 8 10 11 12 14 15 16 17 24 29 31 34 36">The COPII coat is composed of at least 7 proteins: the SEC23/24 complex, the SEC13/31 complex, SFB2, SFB3 and the protein SAR1. Forms two other heterodimeric complexes with SFB3 and PDR17. Interacts with BET1, BET3, BOS1, EMP24, GRH1, SEC16, SEC22 and SYS1.</text>
</comment>
<comment type="interaction">
    <interactant intactId="EBI-16584">
        <id>P15303</id>
    </interactant>
    <interactant intactId="EBI-32083">
        <id>Q04410</id>
        <label>GRH1</label>
    </interactant>
    <organismsDiffer>false</organismsDiffer>
    <experiments>5</experiments>
</comment>
<comment type="interaction">
    <interactant intactId="EBI-16584">
        <id>P15303</id>
    </interactant>
    <interactant intactId="EBI-8536">
        <id>P29295</id>
        <label>HRR25</label>
    </interactant>
    <organismsDiffer>false</organismsDiffer>
    <experiments>5</experiments>
</comment>
<comment type="interaction">
    <interactant intactId="EBI-16584">
        <id>P15303</id>
    </interactant>
    <interactant intactId="EBI-16472">
        <id>P20606</id>
        <label>SAR1</label>
    </interactant>
    <organismsDiffer>false</organismsDiffer>
    <experiments>3</experiments>
</comment>
<comment type="interaction">
    <interactant intactId="EBI-16584">
        <id>P15303</id>
    </interactant>
    <interactant intactId="EBI-16551">
        <id>P48415</id>
        <label>SEC16</label>
    </interactant>
    <organismsDiffer>false</organismsDiffer>
    <experiments>6</experiments>
</comment>
<comment type="interaction">
    <interactant intactId="EBI-16584">
        <id>P15303</id>
    </interactant>
    <interactant intactId="EBI-16592">
        <id>P40482</id>
        <label>SEC24</label>
    </interactant>
    <organismsDiffer>false</organismsDiffer>
    <experiments>6</experiments>
</comment>
<comment type="interaction">
    <interactant intactId="EBI-16584">
        <id>P15303</id>
    </interactant>
    <interactant intactId="EBI-20524">
        <id>P38968</id>
        <label>SEC31</label>
    </interactant>
    <organismsDiffer>false</organismsDiffer>
    <experiments>3</experiments>
</comment>
<comment type="interaction">
    <interactant intactId="EBI-16584">
        <id>P15303</id>
    </interactant>
    <interactant intactId="EBI-17006">
        <id>P53953</id>
        <label>SFB2</label>
    </interactant>
    <organismsDiffer>false</organismsDiffer>
    <experiments>5</experiments>
</comment>
<comment type="interaction">
    <interactant intactId="EBI-16584">
        <id>P15303</id>
    </interactant>
    <interactant intactId="EBI-17012">
        <id>P38810</id>
        <label>SFB3</label>
    </interactant>
    <organismsDiffer>false</organismsDiffer>
    <experiments>3</experiments>
</comment>
<comment type="interaction">
    <interactant intactId="EBI-16584">
        <id>P15303</id>
    </interactant>
    <interactant intactId="EBI-19480">
        <id>Q99394</id>
        <label>TRS33</label>
    </interactant>
    <organismsDiffer>false</organismsDiffer>
    <experiments>3</experiments>
</comment>
<comment type="subcellular location">
    <subcellularLocation>
        <location evidence="4 5 9 27 34">Cytoplasmic vesicle</location>
        <location evidence="4 5 9 27 34">COPII-coated vesicle membrane</location>
        <topology evidence="5 27">Peripheral membrane protein</topology>
        <orientation evidence="27">Cytoplasmic side</orientation>
    </subcellularLocation>
    <subcellularLocation>
        <location evidence="27">Cytoplasm</location>
    </subcellularLocation>
    <subcellularLocation>
        <location evidence="27">Endoplasmic reticulum membrane</location>
        <topology>Peripheral membrane protein</topology>
        <orientation>Cytoplasmic side</orientation>
    </subcellularLocation>
    <subcellularLocation>
        <location evidence="37">Golgi apparatus membrane</location>
        <topology evidence="37">Peripheral membrane protein</topology>
        <orientation evidence="37">Cytoplasmic side</orientation>
    </subcellularLocation>
</comment>
<comment type="PTM">
    <text evidence="11">Ubiquitinated. Ubiquitination is required for the formation of the SEC23/24 complex. Deubiquitinated by the UBP3/BRE5 complex.</text>
</comment>
<comment type="similarity">
    <text evidence="37">Belongs to the SEC23/SEC24 family. SEC23 subfamily.</text>
</comment>
<protein>
    <recommendedName>
        <fullName>Protein transport protein SEC23</fullName>
    </recommendedName>
</protein>